<accession>P18265</accession>
<reference key="1">
    <citation type="journal article" date="1990" name="EMBO J.">
        <title>Molecular cloning and expression of glycogen synthase kinase-3/factor A.</title>
        <authorList>
            <person name="Woodgett J.R."/>
        </authorList>
    </citation>
    <scope>NUCLEOTIDE SEQUENCE [MRNA]</scope>
    <source>
        <strain>Sprague-Dawley</strain>
        <tissue>Brain</tissue>
    </source>
</reference>
<reference key="2">
    <citation type="journal article" date="1993" name="EMBO J.">
        <title>Modulation of the glycogen synthase kinase-3 family by tyrosine phosphorylation.</title>
        <authorList>
            <person name="Hughes K."/>
            <person name="Nikolakaki E."/>
            <person name="Plyte S.E."/>
            <person name="Totty N.F."/>
            <person name="Woodgett J.R."/>
        </authorList>
    </citation>
    <scope>PHOSPHORYLATION AT TYR-279</scope>
</reference>
<reference key="3">
    <citation type="journal article" date="2007" name="J. Biol. Chem.">
        <title>Inhibition of GSK3 promotes replication and survival of pancreatic beta cells.</title>
        <authorList>
            <person name="Mussmann R."/>
            <person name="Geese M."/>
            <person name="Harder F."/>
            <person name="Kegel S."/>
            <person name="Andag U."/>
            <person name="Lomow A."/>
            <person name="Burk U."/>
            <person name="Onichtchouk D."/>
            <person name="Dohrmann C."/>
            <person name="Austen M."/>
        </authorList>
    </citation>
    <scope>FUNCTION IN REGULATION OF PANCREATIC BETA-CELLS</scope>
</reference>
<reference key="4">
    <citation type="journal article" date="2012" name="Nat. Commun.">
        <title>Quantitative maps of protein phosphorylation sites across 14 different rat organs and tissues.</title>
        <authorList>
            <person name="Lundby A."/>
            <person name="Secher A."/>
            <person name="Lage K."/>
            <person name="Nordsborg N.B."/>
            <person name="Dmytriyev A."/>
            <person name="Lundby C."/>
            <person name="Olsen J.V."/>
        </authorList>
    </citation>
    <scope>PHOSPHORYLATION [LARGE SCALE ANALYSIS] AT SER-2</scope>
    <scope>IDENTIFICATION BY MASS SPECTROMETRY [LARGE SCALE ANALYSIS]</scope>
</reference>
<gene>
    <name type="primary">Gsk3a</name>
</gene>
<feature type="initiator methionine" description="Removed" evidence="2">
    <location>
        <position position="1"/>
    </location>
</feature>
<feature type="chain" id="PRO_0000085979" description="Glycogen synthase kinase-3 alpha">
    <location>
        <begin position="2"/>
        <end position="483"/>
    </location>
</feature>
<feature type="domain" description="Protein kinase" evidence="5">
    <location>
        <begin position="119"/>
        <end position="403"/>
    </location>
</feature>
<feature type="region of interest" description="Disordered" evidence="7">
    <location>
        <begin position="1"/>
        <end position="96"/>
    </location>
</feature>
<feature type="region of interest" description="Disordered" evidence="7">
    <location>
        <begin position="443"/>
        <end position="483"/>
    </location>
</feature>
<feature type="compositionally biased region" description="Gly residues" evidence="7">
    <location>
        <begin position="1"/>
        <end position="15"/>
    </location>
</feature>
<feature type="compositionally biased region" description="Gly residues" evidence="7">
    <location>
        <begin position="25"/>
        <end position="82"/>
    </location>
</feature>
<feature type="compositionally biased region" description="Polar residues" evidence="7">
    <location>
        <begin position="450"/>
        <end position="469"/>
    </location>
</feature>
<feature type="active site" description="Proton acceptor" evidence="5 6">
    <location>
        <position position="244"/>
    </location>
</feature>
<feature type="binding site" evidence="5">
    <location>
        <begin position="125"/>
        <end position="133"/>
    </location>
    <ligand>
        <name>ATP</name>
        <dbReference type="ChEBI" id="CHEBI:30616"/>
    </ligand>
</feature>
<feature type="binding site" evidence="5">
    <location>
        <position position="148"/>
    </location>
    <ligand>
        <name>ATP</name>
        <dbReference type="ChEBI" id="CHEBI:30616"/>
    </ligand>
</feature>
<feature type="modified residue" description="N-acetylserine" evidence="2">
    <location>
        <position position="2"/>
    </location>
</feature>
<feature type="modified residue" description="Phosphoserine" evidence="12">
    <location>
        <position position="2"/>
    </location>
</feature>
<feature type="modified residue" description="Phosphoserine; by PKB/AKT1" evidence="4">
    <location>
        <position position="21"/>
    </location>
</feature>
<feature type="modified residue" description="Phosphoserine" evidence="2">
    <location>
        <position position="72"/>
    </location>
</feature>
<feature type="modified residue" description="Phosphoserine" evidence="2">
    <location>
        <position position="77"/>
    </location>
</feature>
<feature type="modified residue" description="Phosphoserine" evidence="2">
    <location>
        <position position="97"/>
    </location>
</feature>
<feature type="modified residue" description="Phosphotyrosine" evidence="9">
    <location>
        <position position="279"/>
    </location>
</feature>
<sequence>MSGGGPSGGGPGGSGRARTSSFAEPGGGGGGGGGGPGGSASGPGGTGGGKASVGAMGGGVGASSSGGGPSGSGGGGSGGPGAGTSFPPPGVKLGRDSGKVTTVVATLGQGPERSQEVAYTDIKVIGNGSFGVVYQARLAETRELVAIKKVLQDKRFKNRELQIMRKLDHCNIVRLRYFFYSSGEKKDELYLNLVLEYVPETVYRVARHFTKAKLIIPIIYVKVYMYQLFRSLAYIHSQGVCHRDIKPQNLLVDPDTAVLKLCDFGSAKQLVRGEPNVSYICSRYYRAPELIFGATDYTSSIDVWSAGCVLAELLLGQPIFPGDSGVDQLVEIIKVLGTPTREQIREMNPNYTEFKFPQIKAHPWTKVFKSRTPPEAIALCSSLLEYTPSSRLSPLEACAHSFFDELRSLGTQLPNNRPLPPLFNFSPGELSIQPSLNAILIPPHLRSPSGPATLTSSSQALTETQTGQDWQAPDATPTLTNSS</sequence>
<protein>
    <recommendedName>
        <fullName>Glycogen synthase kinase-3 alpha</fullName>
        <shortName>GSK-3 alpha</shortName>
        <ecNumber>2.7.11.26</ecNumber>
    </recommendedName>
    <alternativeName>
        <fullName>Factor A</fullName>
        <shortName>FA</shortName>
    </alternativeName>
    <alternativeName>
        <fullName>Serine/threonine-protein kinase GSK3A</fullName>
        <ecNumber>2.7.11.1</ecNumber>
    </alternativeName>
</protein>
<keyword id="KW-0007">Acetylation</keyword>
<keyword id="KW-0067">ATP-binding</keyword>
<keyword id="KW-0119">Carbohydrate metabolism</keyword>
<keyword id="KW-0321">Glycogen metabolism</keyword>
<keyword id="KW-0418">Kinase</keyword>
<keyword id="KW-0524">Neurogenesis</keyword>
<keyword id="KW-0547">Nucleotide-binding</keyword>
<keyword id="KW-0597">Phosphoprotein</keyword>
<keyword id="KW-1185">Reference proteome</keyword>
<keyword id="KW-0723">Serine/threonine-protein kinase</keyword>
<keyword id="KW-0734">Signal transduction inhibitor</keyword>
<keyword id="KW-0808">Transferase</keyword>
<keyword id="KW-0879">Wnt signaling pathway</keyword>
<comment type="function">
    <text evidence="2 3 4 8">Constitutively active protein kinase that acts as a negative regulator in the hormonal control of glucose homeostasis, Wnt signaling and regulation of transcription factors and microtubules, by phosphorylating and inactivating glycogen synthase (GYS1 or GYS2), CTNNB1/beta-catenin, APC and AXIN1. Requires primed phosphorylation of the majority of its substrates. Contributes to insulin regulation of glycogen synthesis by phosphorylating and inhibiting GYS1 activity and hence glycogen synthesis (By similarity). Regulates glycogen metabolism in liver, but not in muscle (By similarity). May also mediate the development of insulin resistance by regulating activation of transcription factors. In Wnt signaling, regulates the level and transcriptional activity of nuclear CTNNB1/beta-catenin. Facilitates amyloid precursor protein (APP) processing and the generation of APP-derived amyloid plaques found in Alzheimer disease (By similarity). May be involved in the regulation of replication in pancreatic beta-cells (PubMed:17242403). Is necessary for the establishment of neuronal polarity and axon outgrowth. Through phosphorylation of the anti-apoptotic protein MCL1, may control cell apoptosis in response to growth factors deprivation (By similarity). Acts as a regulator of autophagy by mediating phosphorylation of KAT5/TIP60 under starvation conditions, activating KAT5/TIP60 acetyltransferase activity and promoting acetylation of key autophagy regulators, such as ULK1 and RUBCNL/Pacer (By similarity). Negatively regulates extrinsic apoptotic signaling pathway via death domain receptors. Promotes the formation of an anti-apoptotic complex, made of DDX3X, BRIC2 and GSK3B, at death receptors, including TNFRSF10B. The anti-apoptotic function is most effective with weak apoptotic signals and can be overcome by stronger stimulation (By similarity).</text>
</comment>
<comment type="catalytic activity">
    <reaction>
        <text>L-seryl-[tau protein] + ATP = O-phospho-L-seryl-[tau protein] + ADP + H(+)</text>
        <dbReference type="Rhea" id="RHEA:12801"/>
        <dbReference type="Rhea" id="RHEA-COMP:13701"/>
        <dbReference type="Rhea" id="RHEA-COMP:13702"/>
        <dbReference type="ChEBI" id="CHEBI:15378"/>
        <dbReference type="ChEBI" id="CHEBI:29999"/>
        <dbReference type="ChEBI" id="CHEBI:30616"/>
        <dbReference type="ChEBI" id="CHEBI:83421"/>
        <dbReference type="ChEBI" id="CHEBI:456216"/>
        <dbReference type="EC" id="2.7.11.26"/>
    </reaction>
</comment>
<comment type="catalytic activity">
    <reaction>
        <text>L-threonyl-[tau protein] + ATP = O-phospho-L-threonyl-[tau protein] + ADP + H(+)</text>
        <dbReference type="Rhea" id="RHEA:53904"/>
        <dbReference type="Rhea" id="RHEA-COMP:13703"/>
        <dbReference type="Rhea" id="RHEA-COMP:13704"/>
        <dbReference type="ChEBI" id="CHEBI:15378"/>
        <dbReference type="ChEBI" id="CHEBI:30013"/>
        <dbReference type="ChEBI" id="CHEBI:30616"/>
        <dbReference type="ChEBI" id="CHEBI:61977"/>
        <dbReference type="ChEBI" id="CHEBI:456216"/>
        <dbReference type="EC" id="2.7.11.26"/>
    </reaction>
</comment>
<comment type="catalytic activity">
    <reaction evidence="4">
        <text>L-seryl-[protein] + ATP = O-phospho-L-seryl-[protein] + ADP + H(+)</text>
        <dbReference type="Rhea" id="RHEA:17989"/>
        <dbReference type="Rhea" id="RHEA-COMP:9863"/>
        <dbReference type="Rhea" id="RHEA-COMP:11604"/>
        <dbReference type="ChEBI" id="CHEBI:15378"/>
        <dbReference type="ChEBI" id="CHEBI:29999"/>
        <dbReference type="ChEBI" id="CHEBI:30616"/>
        <dbReference type="ChEBI" id="CHEBI:83421"/>
        <dbReference type="ChEBI" id="CHEBI:456216"/>
        <dbReference type="EC" id="2.7.11.1"/>
    </reaction>
</comment>
<comment type="catalytic activity">
    <reaction>
        <text>L-threonyl-[protein] + ATP = O-phospho-L-threonyl-[protein] + ADP + H(+)</text>
        <dbReference type="Rhea" id="RHEA:46608"/>
        <dbReference type="Rhea" id="RHEA-COMP:11060"/>
        <dbReference type="Rhea" id="RHEA-COMP:11605"/>
        <dbReference type="ChEBI" id="CHEBI:15378"/>
        <dbReference type="ChEBI" id="CHEBI:30013"/>
        <dbReference type="ChEBI" id="CHEBI:30616"/>
        <dbReference type="ChEBI" id="CHEBI:61977"/>
        <dbReference type="ChEBI" id="CHEBI:456216"/>
        <dbReference type="EC" id="2.7.11.1"/>
    </reaction>
</comment>
<comment type="activity regulation">
    <text evidence="1">Activated by phosphorylation at Tyr-279. In response to insulin, inhibited by phosphorylation at Ser-21 by PKB/AKT1; phosphorylation at this site causes a conformational change, preventing access of substrates to the active site. Inhibited by lithium (By similarity).</text>
</comment>
<comment type="subunit">
    <text evidence="2">Monomer. Interacts with ARRB2, AXIN1 and CTNNB1/beta-catenin (By similarity). Interacts with CTNND2 (By similarity). Interacts with LMBR1L (By similarity). Interacts with DDX3X (By similarity). Interacts with TNFRSF10B (By similarity).</text>
</comment>
<comment type="PTM">
    <text evidence="1">Phosphorylated by AKT1 at Ser-21: upon insulin-mediated signaling, the activated PKB/AKT1 protein kinase phosphorylates and deactivates GSK3A, resulting in the dephosphorylation and activation of GYS1. Activated by phosphorylation at Tyr-279 (By similarity).</text>
</comment>
<comment type="miscellaneous">
    <text evidence="11">Simultaneous silencing of GSK3A and GSK3B by RNAi stimulates replication and promotes survival of INS-1E pancreatic beta cells.</text>
</comment>
<comment type="similarity">
    <text evidence="10">Belongs to the protein kinase superfamily. CMGC Ser/Thr protein kinase family. GSK-3 subfamily.</text>
</comment>
<name>GSK3A_RAT</name>
<proteinExistence type="evidence at protein level"/>
<dbReference type="EC" id="2.7.11.26"/>
<dbReference type="EC" id="2.7.11.1"/>
<dbReference type="EMBL" id="X53427">
    <property type="protein sequence ID" value="CAA37518.1"/>
    <property type="molecule type" value="mRNA"/>
</dbReference>
<dbReference type="PIR" id="S14707">
    <property type="entry name" value="TVRTKA"/>
</dbReference>
<dbReference type="RefSeq" id="NP_059040.1">
    <property type="nucleotide sequence ID" value="NM_017344.3"/>
</dbReference>
<dbReference type="SMR" id="P18265"/>
<dbReference type="BioGRID" id="248424">
    <property type="interactions" value="2"/>
</dbReference>
<dbReference type="CORUM" id="P18265"/>
<dbReference type="FunCoup" id="P18265">
    <property type="interactions" value="2410"/>
</dbReference>
<dbReference type="IntAct" id="P18265">
    <property type="interactions" value="3"/>
</dbReference>
<dbReference type="STRING" id="10116.ENSRNOP00000027677"/>
<dbReference type="ChEMBL" id="CHEMBL1075224"/>
<dbReference type="GlyGen" id="P18265">
    <property type="glycosylation" value="1 site"/>
</dbReference>
<dbReference type="iPTMnet" id="P18265"/>
<dbReference type="PhosphoSitePlus" id="P18265"/>
<dbReference type="jPOST" id="P18265"/>
<dbReference type="PaxDb" id="10116-ENSRNOP00000027677"/>
<dbReference type="DNASU" id="50686"/>
<dbReference type="GeneID" id="50686"/>
<dbReference type="KEGG" id="rno:50686"/>
<dbReference type="UCSC" id="RGD:620351">
    <property type="organism name" value="rat"/>
</dbReference>
<dbReference type="AGR" id="RGD:620351"/>
<dbReference type="CTD" id="2931"/>
<dbReference type="RGD" id="620351">
    <property type="gene designation" value="Gsk3a"/>
</dbReference>
<dbReference type="VEuPathDB" id="HostDB:ENSRNOG00000020417"/>
<dbReference type="eggNOG" id="KOG0658">
    <property type="taxonomic scope" value="Eukaryota"/>
</dbReference>
<dbReference type="InParanoid" id="P18265"/>
<dbReference type="OrthoDB" id="272141at2759"/>
<dbReference type="PhylomeDB" id="P18265"/>
<dbReference type="BRENDA" id="2.7.11.26">
    <property type="organism ID" value="5301"/>
</dbReference>
<dbReference type="PRO" id="PR:P18265"/>
<dbReference type="Proteomes" id="UP000002494">
    <property type="component" value="Chromosome 1"/>
</dbReference>
<dbReference type="Bgee" id="ENSRNOG00000020417">
    <property type="expression patterns" value="Expressed in frontal cortex and 18 other cell types or tissues"/>
</dbReference>
<dbReference type="ExpressionAtlas" id="P18265">
    <property type="expression patterns" value="baseline and differential"/>
</dbReference>
<dbReference type="GO" id="GO:0030424">
    <property type="term" value="C:axon"/>
    <property type="evidence" value="ECO:0000318"/>
    <property type="project" value="GO_Central"/>
</dbReference>
<dbReference type="GO" id="GO:0005737">
    <property type="term" value="C:cytoplasm"/>
    <property type="evidence" value="ECO:0000318"/>
    <property type="project" value="GO_Central"/>
</dbReference>
<dbReference type="GO" id="GO:0005829">
    <property type="term" value="C:cytosol"/>
    <property type="evidence" value="ECO:0000318"/>
    <property type="project" value="GO_Central"/>
</dbReference>
<dbReference type="GO" id="GO:0005874">
    <property type="term" value="C:microtubule"/>
    <property type="evidence" value="ECO:0000314"/>
    <property type="project" value="RGD"/>
</dbReference>
<dbReference type="GO" id="GO:0005739">
    <property type="term" value="C:mitochondrion"/>
    <property type="evidence" value="ECO:0007669"/>
    <property type="project" value="GOC"/>
</dbReference>
<dbReference type="GO" id="GO:0005634">
    <property type="term" value="C:nucleus"/>
    <property type="evidence" value="ECO:0000318"/>
    <property type="project" value="GO_Central"/>
</dbReference>
<dbReference type="GO" id="GO:0005524">
    <property type="term" value="F:ATP binding"/>
    <property type="evidence" value="ECO:0007669"/>
    <property type="project" value="UniProtKB-KW"/>
</dbReference>
<dbReference type="GO" id="GO:0034236">
    <property type="term" value="F:protein kinase A catalytic subunit binding"/>
    <property type="evidence" value="ECO:0000353"/>
    <property type="project" value="BHF-UCL"/>
</dbReference>
<dbReference type="GO" id="GO:0004672">
    <property type="term" value="F:protein kinase activity"/>
    <property type="evidence" value="ECO:0000266"/>
    <property type="project" value="RGD"/>
</dbReference>
<dbReference type="GO" id="GO:0019901">
    <property type="term" value="F:protein kinase binding"/>
    <property type="evidence" value="ECO:0000353"/>
    <property type="project" value="RGD"/>
</dbReference>
<dbReference type="GO" id="GO:0106310">
    <property type="term" value="F:protein serine kinase activity"/>
    <property type="evidence" value="ECO:0007669"/>
    <property type="project" value="RHEA"/>
</dbReference>
<dbReference type="GO" id="GO:0004674">
    <property type="term" value="F:protein serine/threonine kinase activity"/>
    <property type="evidence" value="ECO:0000314"/>
    <property type="project" value="BHF-UCL"/>
</dbReference>
<dbReference type="GO" id="GO:0120283">
    <property type="term" value="F:protein serine/threonine kinase binding"/>
    <property type="evidence" value="ECO:0000353"/>
    <property type="project" value="BHF-UCL"/>
</dbReference>
<dbReference type="GO" id="GO:0005102">
    <property type="term" value="F:signaling receptor binding"/>
    <property type="evidence" value="ECO:0000266"/>
    <property type="project" value="RGD"/>
</dbReference>
<dbReference type="GO" id="GO:0141068">
    <property type="term" value="P:autosome genomic imprinting"/>
    <property type="evidence" value="ECO:0000266"/>
    <property type="project" value="RGD"/>
</dbReference>
<dbReference type="GO" id="GO:0003214">
    <property type="term" value="P:cardiac left ventricle morphogenesis"/>
    <property type="evidence" value="ECO:0000266"/>
    <property type="project" value="RGD"/>
</dbReference>
<dbReference type="GO" id="GO:0030154">
    <property type="term" value="P:cell differentiation"/>
    <property type="evidence" value="ECO:0000318"/>
    <property type="project" value="GO_Central"/>
</dbReference>
<dbReference type="GO" id="GO:0016477">
    <property type="term" value="P:cell migration"/>
    <property type="evidence" value="ECO:0000266"/>
    <property type="project" value="RGD"/>
</dbReference>
<dbReference type="GO" id="GO:0071385">
    <property type="term" value="P:cellular response to glucocorticoid stimulus"/>
    <property type="evidence" value="ECO:0000266"/>
    <property type="project" value="RGD"/>
</dbReference>
<dbReference type="GO" id="GO:0032869">
    <property type="term" value="P:cellular response to insulin stimulus"/>
    <property type="evidence" value="ECO:0000266"/>
    <property type="project" value="RGD"/>
</dbReference>
<dbReference type="GO" id="GO:0036016">
    <property type="term" value="P:cellular response to interleukin-3"/>
    <property type="evidence" value="ECO:0000250"/>
    <property type="project" value="UniProtKB"/>
</dbReference>
<dbReference type="GO" id="GO:0071285">
    <property type="term" value="P:cellular response to lithium ion"/>
    <property type="evidence" value="ECO:0000266"/>
    <property type="project" value="RGD"/>
</dbReference>
<dbReference type="GO" id="GO:0097191">
    <property type="term" value="P:extrinsic apoptotic signaling pathway"/>
    <property type="evidence" value="ECO:0000266"/>
    <property type="project" value="RGD"/>
</dbReference>
<dbReference type="GO" id="GO:0097192">
    <property type="term" value="P:extrinsic apoptotic signaling pathway in absence of ligand"/>
    <property type="evidence" value="ECO:0000250"/>
    <property type="project" value="UniProtKB"/>
</dbReference>
<dbReference type="GO" id="GO:0005977">
    <property type="term" value="P:glycogen metabolic process"/>
    <property type="evidence" value="ECO:0007669"/>
    <property type="project" value="UniProtKB-KW"/>
</dbReference>
<dbReference type="GO" id="GO:0008286">
    <property type="term" value="P:insulin receptor signaling pathway"/>
    <property type="evidence" value="ECO:0000266"/>
    <property type="project" value="RGD"/>
</dbReference>
<dbReference type="GO" id="GO:0090090">
    <property type="term" value="P:negative regulation of canonical Wnt signaling pathway"/>
    <property type="evidence" value="ECO:0000318"/>
    <property type="project" value="GO_Central"/>
</dbReference>
<dbReference type="GO" id="GO:0061052">
    <property type="term" value="P:negative regulation of cell growth involved in cardiac muscle cell development"/>
    <property type="evidence" value="ECO:0000266"/>
    <property type="project" value="RGD"/>
</dbReference>
<dbReference type="GO" id="GO:0046325">
    <property type="term" value="P:negative regulation of D-glucose import"/>
    <property type="evidence" value="ECO:0000266"/>
    <property type="project" value="RGD"/>
</dbReference>
<dbReference type="GO" id="GO:2000171">
    <property type="term" value="P:negative regulation of dendrite development"/>
    <property type="evidence" value="ECO:0000315"/>
    <property type="project" value="RGD"/>
</dbReference>
<dbReference type="GO" id="GO:0046627">
    <property type="term" value="P:negative regulation of insulin receptor signaling pathway"/>
    <property type="evidence" value="ECO:0000314"/>
    <property type="project" value="BHF-UCL"/>
</dbReference>
<dbReference type="GO" id="GO:0032007">
    <property type="term" value="P:negative regulation of TOR signaling"/>
    <property type="evidence" value="ECO:0000266"/>
    <property type="project" value="RGD"/>
</dbReference>
<dbReference type="GO" id="GO:0007399">
    <property type="term" value="P:nervous system development"/>
    <property type="evidence" value="ECO:0007669"/>
    <property type="project" value="UniProtKB-KW"/>
</dbReference>
<dbReference type="GO" id="GO:0071879">
    <property type="term" value="P:positive regulation of adenylate cyclase-activating adrenergic receptor signaling pathway"/>
    <property type="evidence" value="ECO:0000266"/>
    <property type="project" value="RGD"/>
</dbReference>
<dbReference type="GO" id="GO:0106071">
    <property type="term" value="P:positive regulation of adenylate cyclase-activating G protein-coupled receptor signaling pathway"/>
    <property type="evidence" value="ECO:0000266"/>
    <property type="project" value="RGD"/>
</dbReference>
<dbReference type="GO" id="GO:1902004">
    <property type="term" value="P:positive regulation of amyloid-beta formation"/>
    <property type="evidence" value="ECO:0000266"/>
    <property type="project" value="RGD"/>
</dbReference>
<dbReference type="GO" id="GO:0010508">
    <property type="term" value="P:positive regulation of autophagy"/>
    <property type="evidence" value="ECO:0000250"/>
    <property type="project" value="UniProtKB"/>
</dbReference>
<dbReference type="GO" id="GO:0010628">
    <property type="term" value="P:positive regulation of gene expression"/>
    <property type="evidence" value="ECO:0000266"/>
    <property type="project" value="RGD"/>
</dbReference>
<dbReference type="GO" id="GO:0045823">
    <property type="term" value="P:positive regulation of heart contraction"/>
    <property type="evidence" value="ECO:0000266"/>
    <property type="project" value="RGD"/>
</dbReference>
<dbReference type="GO" id="GO:1901030">
    <property type="term" value="P:positive regulation of mitochondrial outer membrane permeabilization involved in apoptotic signaling pathway"/>
    <property type="evidence" value="ECO:0000250"/>
    <property type="project" value="UniProtKB"/>
</dbReference>
<dbReference type="GO" id="GO:0043525">
    <property type="term" value="P:positive regulation of neuron apoptotic process"/>
    <property type="evidence" value="ECO:0000315"/>
    <property type="project" value="RGD"/>
</dbReference>
<dbReference type="GO" id="GO:0032436">
    <property type="term" value="P:positive regulation of proteasomal ubiquitin-dependent protein catabolic process"/>
    <property type="evidence" value="ECO:0000266"/>
    <property type="project" value="RGD"/>
</dbReference>
<dbReference type="GO" id="GO:1903955">
    <property type="term" value="P:positive regulation of protein targeting to mitochondrion"/>
    <property type="evidence" value="ECO:0000266"/>
    <property type="project" value="RGD"/>
</dbReference>
<dbReference type="GO" id="GO:0031398">
    <property type="term" value="P:positive regulation of protein ubiquitination"/>
    <property type="evidence" value="ECO:0000266"/>
    <property type="project" value="RGD"/>
</dbReference>
<dbReference type="GO" id="GO:0045944">
    <property type="term" value="P:positive regulation of transcription by RNA polymerase II"/>
    <property type="evidence" value="ECO:0000266"/>
    <property type="project" value="RGD"/>
</dbReference>
<dbReference type="GO" id="GO:0043161">
    <property type="term" value="P:proteasome-mediated ubiquitin-dependent protein catabolic process"/>
    <property type="evidence" value="ECO:0000250"/>
    <property type="project" value="UniProtKB"/>
</dbReference>
<dbReference type="GO" id="GO:0070507">
    <property type="term" value="P:regulation of microtubule cytoskeleton organization"/>
    <property type="evidence" value="ECO:0000318"/>
    <property type="project" value="GO_Central"/>
</dbReference>
<dbReference type="GO" id="GO:1901524">
    <property type="term" value="P:regulation of mitophagy"/>
    <property type="evidence" value="ECO:0000266"/>
    <property type="project" value="RGD"/>
</dbReference>
<dbReference type="GO" id="GO:0010975">
    <property type="term" value="P:regulation of neuron projection development"/>
    <property type="evidence" value="ECO:0000318"/>
    <property type="project" value="GO_Central"/>
</dbReference>
<dbReference type="GO" id="GO:0003073">
    <property type="term" value="P:regulation of systemic arterial blood pressure"/>
    <property type="evidence" value="ECO:0000266"/>
    <property type="project" value="RGD"/>
</dbReference>
<dbReference type="GO" id="GO:0016055">
    <property type="term" value="P:Wnt signaling pathway"/>
    <property type="evidence" value="ECO:0007669"/>
    <property type="project" value="UniProtKB-KW"/>
</dbReference>
<dbReference type="CDD" id="cd14137">
    <property type="entry name" value="STKc_GSK3"/>
    <property type="match status" value="1"/>
</dbReference>
<dbReference type="FunFam" id="1.10.510.10:FF:000055">
    <property type="entry name" value="Glycogen synthase kinase-3 beta"/>
    <property type="match status" value="1"/>
</dbReference>
<dbReference type="FunFam" id="3.30.200.20:FF:000009">
    <property type="entry name" value="Glycogen synthase kinase-3 beta"/>
    <property type="match status" value="1"/>
</dbReference>
<dbReference type="Gene3D" id="3.30.200.20">
    <property type="entry name" value="Phosphorylase Kinase, domain 1"/>
    <property type="match status" value="1"/>
</dbReference>
<dbReference type="Gene3D" id="1.10.510.10">
    <property type="entry name" value="Transferase(Phosphotransferase) domain 1"/>
    <property type="match status" value="1"/>
</dbReference>
<dbReference type="InterPro" id="IPR050591">
    <property type="entry name" value="GSK-3"/>
</dbReference>
<dbReference type="InterPro" id="IPR011009">
    <property type="entry name" value="Kinase-like_dom_sf"/>
</dbReference>
<dbReference type="InterPro" id="IPR000719">
    <property type="entry name" value="Prot_kinase_dom"/>
</dbReference>
<dbReference type="InterPro" id="IPR017441">
    <property type="entry name" value="Protein_kinase_ATP_BS"/>
</dbReference>
<dbReference type="InterPro" id="IPR008271">
    <property type="entry name" value="Ser/Thr_kinase_AS"/>
</dbReference>
<dbReference type="InterPro" id="IPR039192">
    <property type="entry name" value="STKc_GSK3"/>
</dbReference>
<dbReference type="PANTHER" id="PTHR24057">
    <property type="entry name" value="GLYCOGEN SYNTHASE KINASE-3 ALPHA"/>
    <property type="match status" value="1"/>
</dbReference>
<dbReference type="PANTHER" id="PTHR24057:SF14">
    <property type="entry name" value="GLYCOGEN SYNTHASE KINASE-3 ALPHA"/>
    <property type="match status" value="1"/>
</dbReference>
<dbReference type="Pfam" id="PF00069">
    <property type="entry name" value="Pkinase"/>
    <property type="match status" value="1"/>
</dbReference>
<dbReference type="SMART" id="SM00220">
    <property type="entry name" value="S_TKc"/>
    <property type="match status" value="1"/>
</dbReference>
<dbReference type="SUPFAM" id="SSF56112">
    <property type="entry name" value="Protein kinase-like (PK-like)"/>
    <property type="match status" value="1"/>
</dbReference>
<dbReference type="PROSITE" id="PS00107">
    <property type="entry name" value="PROTEIN_KINASE_ATP"/>
    <property type="match status" value="1"/>
</dbReference>
<dbReference type="PROSITE" id="PS50011">
    <property type="entry name" value="PROTEIN_KINASE_DOM"/>
    <property type="match status" value="1"/>
</dbReference>
<dbReference type="PROSITE" id="PS00108">
    <property type="entry name" value="PROTEIN_KINASE_ST"/>
    <property type="match status" value="1"/>
</dbReference>
<evidence type="ECO:0000250" key="1"/>
<evidence type="ECO:0000250" key="2">
    <source>
        <dbReference type="UniProtKB" id="P49840"/>
    </source>
</evidence>
<evidence type="ECO:0000250" key="3">
    <source>
        <dbReference type="UniProtKB" id="P49841"/>
    </source>
</evidence>
<evidence type="ECO:0000250" key="4">
    <source>
        <dbReference type="UniProtKB" id="Q2NL51"/>
    </source>
</evidence>
<evidence type="ECO:0000255" key="5">
    <source>
        <dbReference type="PROSITE-ProRule" id="PRU00159"/>
    </source>
</evidence>
<evidence type="ECO:0000255" key="6">
    <source>
        <dbReference type="PROSITE-ProRule" id="PRU10027"/>
    </source>
</evidence>
<evidence type="ECO:0000256" key="7">
    <source>
        <dbReference type="SAM" id="MobiDB-lite"/>
    </source>
</evidence>
<evidence type="ECO:0000269" key="8">
    <source>
    </source>
</evidence>
<evidence type="ECO:0000269" key="9">
    <source>
    </source>
</evidence>
<evidence type="ECO:0000305" key="10"/>
<evidence type="ECO:0000305" key="11">
    <source>
    </source>
</evidence>
<evidence type="ECO:0007744" key="12">
    <source>
    </source>
</evidence>
<organism>
    <name type="scientific">Rattus norvegicus</name>
    <name type="common">Rat</name>
    <dbReference type="NCBI Taxonomy" id="10116"/>
    <lineage>
        <taxon>Eukaryota</taxon>
        <taxon>Metazoa</taxon>
        <taxon>Chordata</taxon>
        <taxon>Craniata</taxon>
        <taxon>Vertebrata</taxon>
        <taxon>Euteleostomi</taxon>
        <taxon>Mammalia</taxon>
        <taxon>Eutheria</taxon>
        <taxon>Euarchontoglires</taxon>
        <taxon>Glires</taxon>
        <taxon>Rodentia</taxon>
        <taxon>Myomorpha</taxon>
        <taxon>Muroidea</taxon>
        <taxon>Muridae</taxon>
        <taxon>Murinae</taxon>
        <taxon>Rattus</taxon>
    </lineage>
</organism>